<evidence type="ECO:0000250" key="1">
    <source>
        <dbReference type="UniProtKB" id="F4HVY0"/>
    </source>
</evidence>
<evidence type="ECO:0000255" key="2"/>
<evidence type="ECO:0000305" key="3"/>
<evidence type="ECO:0000312" key="4">
    <source>
        <dbReference type="EMBL" id="EEC68657.1"/>
    </source>
</evidence>
<keyword id="KW-0256">Endoplasmic reticulum</keyword>
<keyword id="KW-0456">Lyase</keyword>
<keyword id="KW-0472">Membrane</keyword>
<keyword id="KW-0521">NADP</keyword>
<keyword id="KW-1185">Reference proteome</keyword>
<keyword id="KW-0812">Transmembrane</keyword>
<keyword id="KW-1133">Transmembrane helix</keyword>
<gene>
    <name evidence="3" type="primary">GL1-11</name>
    <name evidence="4" type="ORF">OsI_37101</name>
</gene>
<organism>
    <name type="scientific">Oryza sativa subsp. indica</name>
    <name type="common">Rice</name>
    <dbReference type="NCBI Taxonomy" id="39946"/>
    <lineage>
        <taxon>Eukaryota</taxon>
        <taxon>Viridiplantae</taxon>
        <taxon>Streptophyta</taxon>
        <taxon>Embryophyta</taxon>
        <taxon>Tracheophyta</taxon>
        <taxon>Spermatophyta</taxon>
        <taxon>Magnoliopsida</taxon>
        <taxon>Liliopsida</taxon>
        <taxon>Poales</taxon>
        <taxon>Poaceae</taxon>
        <taxon>BOP clade</taxon>
        <taxon>Oryzoideae</taxon>
        <taxon>Oryzeae</taxon>
        <taxon>Oryzinae</taxon>
        <taxon>Oryza</taxon>
        <taxon>Oryza sativa</taxon>
    </lineage>
</organism>
<protein>
    <recommendedName>
        <fullName evidence="3">Very-long-chain aldehyde decarbonylase GL1-11</fullName>
        <ecNumber evidence="1">4.1.99.5</ecNumber>
    </recommendedName>
    <alternativeName>
        <fullName evidence="3">Protein GLOSSY 1-11</fullName>
    </alternativeName>
</protein>
<proteinExistence type="inferred from homology"/>
<feature type="chain" id="PRO_0000445886" description="Very-long-chain aldehyde decarbonylase GL1-11">
    <location>
        <begin position="1"/>
        <end position="266"/>
    </location>
</feature>
<feature type="transmembrane region" description="Helical" evidence="2">
    <location>
        <begin position="25"/>
        <end position="45"/>
    </location>
</feature>
<feature type="transmembrane region" description="Helical" evidence="2">
    <location>
        <begin position="74"/>
        <end position="94"/>
    </location>
</feature>
<feature type="transmembrane region" description="Helical" evidence="2">
    <location>
        <begin position="106"/>
        <end position="126"/>
    </location>
</feature>
<feature type="transmembrane region" description="Helical" evidence="2">
    <location>
        <begin position="163"/>
        <end position="183"/>
    </location>
</feature>
<feature type="domain" description="Fatty acid hydroxylase" evidence="2">
    <location>
        <begin position="113"/>
        <end position="248"/>
    </location>
</feature>
<sequence>MAASALDSAWEGLTGSFTEFQLATVVTFLLHETVFFLSGLPSLLFERFGLFAKYKIQKKSNTPSYQNRCVLRLILYHVCVNLPVMVLSYPAFKFMGLRSSLPLPHWTVIVSQVLFYFVLEDFIFYWGHRALHTKWLYKHVHSVHHEYATPFGLTSEYAHPAEILFLGFATIVGPALTGPHLFTLWLWMVLRVLETVEAHSGYHFPWSPSNFLPLYGGSDFHDYHHRVLYTKSGNYASTFVYMDWLFGTDKDYRNAKAIEEKDGKHL</sequence>
<name>GLO1B_ORYSI</name>
<accession>B8BIM2</accession>
<reference key="1">
    <citation type="journal article" date="2005" name="PLoS Biol.">
        <title>The genomes of Oryza sativa: a history of duplications.</title>
        <authorList>
            <person name="Yu J."/>
            <person name="Wang J."/>
            <person name="Lin W."/>
            <person name="Li S."/>
            <person name="Li H."/>
            <person name="Zhou J."/>
            <person name="Ni P."/>
            <person name="Dong W."/>
            <person name="Hu S."/>
            <person name="Zeng C."/>
            <person name="Zhang J."/>
            <person name="Zhang Y."/>
            <person name="Li R."/>
            <person name="Xu Z."/>
            <person name="Li S."/>
            <person name="Li X."/>
            <person name="Zheng H."/>
            <person name="Cong L."/>
            <person name="Lin L."/>
            <person name="Yin J."/>
            <person name="Geng J."/>
            <person name="Li G."/>
            <person name="Shi J."/>
            <person name="Liu J."/>
            <person name="Lv H."/>
            <person name="Li J."/>
            <person name="Wang J."/>
            <person name="Deng Y."/>
            <person name="Ran L."/>
            <person name="Shi X."/>
            <person name="Wang X."/>
            <person name="Wu Q."/>
            <person name="Li C."/>
            <person name="Ren X."/>
            <person name="Wang J."/>
            <person name="Wang X."/>
            <person name="Li D."/>
            <person name="Liu D."/>
            <person name="Zhang X."/>
            <person name="Ji Z."/>
            <person name="Zhao W."/>
            <person name="Sun Y."/>
            <person name="Zhang Z."/>
            <person name="Bao J."/>
            <person name="Han Y."/>
            <person name="Dong L."/>
            <person name="Ji J."/>
            <person name="Chen P."/>
            <person name="Wu S."/>
            <person name="Liu J."/>
            <person name="Xiao Y."/>
            <person name="Bu D."/>
            <person name="Tan J."/>
            <person name="Yang L."/>
            <person name="Ye C."/>
            <person name="Zhang J."/>
            <person name="Xu J."/>
            <person name="Zhou Y."/>
            <person name="Yu Y."/>
            <person name="Zhang B."/>
            <person name="Zhuang S."/>
            <person name="Wei H."/>
            <person name="Liu B."/>
            <person name="Lei M."/>
            <person name="Yu H."/>
            <person name="Li Y."/>
            <person name="Xu H."/>
            <person name="Wei S."/>
            <person name="He X."/>
            <person name="Fang L."/>
            <person name="Zhang Z."/>
            <person name="Zhang Y."/>
            <person name="Huang X."/>
            <person name="Su Z."/>
            <person name="Tong W."/>
            <person name="Li J."/>
            <person name="Tong Z."/>
            <person name="Li S."/>
            <person name="Ye J."/>
            <person name="Wang L."/>
            <person name="Fang L."/>
            <person name="Lei T."/>
            <person name="Chen C.-S."/>
            <person name="Chen H.-C."/>
            <person name="Xu Z."/>
            <person name="Li H."/>
            <person name="Huang H."/>
            <person name="Zhang F."/>
            <person name="Xu H."/>
            <person name="Li N."/>
            <person name="Zhao C."/>
            <person name="Li S."/>
            <person name="Dong L."/>
            <person name="Huang Y."/>
            <person name="Li L."/>
            <person name="Xi Y."/>
            <person name="Qi Q."/>
            <person name="Li W."/>
            <person name="Zhang B."/>
            <person name="Hu W."/>
            <person name="Zhang Y."/>
            <person name="Tian X."/>
            <person name="Jiao Y."/>
            <person name="Liang X."/>
            <person name="Jin J."/>
            <person name="Gao L."/>
            <person name="Zheng W."/>
            <person name="Hao B."/>
            <person name="Liu S.-M."/>
            <person name="Wang W."/>
            <person name="Yuan L."/>
            <person name="Cao M."/>
            <person name="McDermott J."/>
            <person name="Samudrala R."/>
            <person name="Wang J."/>
            <person name="Wong G.K.-S."/>
            <person name="Yang H."/>
        </authorList>
    </citation>
    <scope>NUCLEOTIDE SEQUENCE [LARGE SCALE GENOMIC DNA]</scope>
    <source>
        <strain>cv. 93-11</strain>
    </source>
</reference>
<comment type="function">
    <text evidence="1">Aldehyde decarbonylase involved in the conversion of aldehydes to alkanes. Core component of a very-long-chain alkane synthesis complex.</text>
</comment>
<comment type="catalytic activity">
    <reaction evidence="1">
        <text>a long-chain fatty aldehyde + 2 NADPH + O2 + H(+) = a long-chain alkane + formate + 2 NADP(+) + H2O</text>
        <dbReference type="Rhea" id="RHEA:21440"/>
        <dbReference type="ChEBI" id="CHEBI:15377"/>
        <dbReference type="ChEBI" id="CHEBI:15378"/>
        <dbReference type="ChEBI" id="CHEBI:15379"/>
        <dbReference type="ChEBI" id="CHEBI:15740"/>
        <dbReference type="ChEBI" id="CHEBI:17176"/>
        <dbReference type="ChEBI" id="CHEBI:57783"/>
        <dbReference type="ChEBI" id="CHEBI:58349"/>
        <dbReference type="ChEBI" id="CHEBI:83563"/>
        <dbReference type="EC" id="4.1.99.5"/>
    </reaction>
</comment>
<comment type="subunit">
    <text evidence="1">Homodimer.</text>
</comment>
<comment type="subcellular location">
    <subcellularLocation>
        <location evidence="1">Endoplasmic reticulum membrane</location>
        <topology evidence="1">Multi-pass membrane protein</topology>
    </subcellularLocation>
</comment>
<comment type="similarity">
    <text evidence="3">Belongs to the sterol desaturase family.</text>
</comment>
<dbReference type="EC" id="4.1.99.5" evidence="1"/>
<dbReference type="EMBL" id="CM000136">
    <property type="protein sequence ID" value="EEC68657.1"/>
    <property type="molecule type" value="Genomic_DNA"/>
</dbReference>
<dbReference type="SMR" id="B8BIM2"/>
<dbReference type="STRING" id="39946.B8BIM2"/>
<dbReference type="EnsemblPlants" id="BGIOSGA033508-TA">
    <property type="protein sequence ID" value="BGIOSGA033508-PA"/>
    <property type="gene ID" value="BGIOSGA033508"/>
</dbReference>
<dbReference type="EnsemblPlants" id="OsGoSa_11g0024740.01">
    <property type="protein sequence ID" value="OsGoSa_11g0024740.01"/>
    <property type="gene ID" value="OsGoSa_11g0024740"/>
</dbReference>
<dbReference type="EnsemblPlants" id="OsIR64_11g0025490.01">
    <property type="protein sequence ID" value="OsIR64_11g0025490.01"/>
    <property type="gene ID" value="OsIR64_11g0025490"/>
</dbReference>
<dbReference type="EnsemblPlants" id="OsKYG_11g0025330.01">
    <property type="protein sequence ID" value="OsKYG_11g0025330.01"/>
    <property type="gene ID" value="OsKYG_11g0025330"/>
</dbReference>
<dbReference type="EnsemblPlants" id="OsLaMu_11g0024870.01">
    <property type="protein sequence ID" value="OsLaMu_11g0024870.01"/>
    <property type="gene ID" value="OsLaMu_11g0024870"/>
</dbReference>
<dbReference type="EnsemblPlants" id="OsLima_11g0025270.01">
    <property type="protein sequence ID" value="OsLima_11g0025270.01"/>
    <property type="gene ID" value="OsLima_11g0025270"/>
</dbReference>
<dbReference type="EnsemblPlants" id="OsMH63_11G026600_01">
    <property type="protein sequence ID" value="OsMH63_11G026600_01"/>
    <property type="gene ID" value="OsMH63_11G026600"/>
</dbReference>
<dbReference type="EnsemblPlants" id="OsPr106_11g0024930.01">
    <property type="protein sequence ID" value="OsPr106_11g0024930.01"/>
    <property type="gene ID" value="OsPr106_11g0024930"/>
</dbReference>
<dbReference type="EnsemblPlants" id="OsZS97_11G024810_01">
    <property type="protein sequence ID" value="OsZS97_11G024810_01"/>
    <property type="gene ID" value="OsZS97_11G024810"/>
</dbReference>
<dbReference type="Gramene" id="BGIOSGA033508-TA">
    <property type="protein sequence ID" value="BGIOSGA033508-PA"/>
    <property type="gene ID" value="BGIOSGA033508"/>
</dbReference>
<dbReference type="Gramene" id="OsGoSa_11g0024740.01">
    <property type="protein sequence ID" value="OsGoSa_11g0024740.01"/>
    <property type="gene ID" value="OsGoSa_11g0024740"/>
</dbReference>
<dbReference type="Gramene" id="OsIR64_11g0025490.01">
    <property type="protein sequence ID" value="OsIR64_11g0025490.01"/>
    <property type="gene ID" value="OsIR64_11g0025490"/>
</dbReference>
<dbReference type="Gramene" id="OsKYG_11g0025330.01">
    <property type="protein sequence ID" value="OsKYG_11g0025330.01"/>
    <property type="gene ID" value="OsKYG_11g0025330"/>
</dbReference>
<dbReference type="Gramene" id="OsLaMu_11g0024870.01">
    <property type="protein sequence ID" value="OsLaMu_11g0024870.01"/>
    <property type="gene ID" value="OsLaMu_11g0024870"/>
</dbReference>
<dbReference type="Gramene" id="OsLima_11g0025270.01">
    <property type="protein sequence ID" value="OsLima_11g0025270.01"/>
    <property type="gene ID" value="OsLima_11g0025270"/>
</dbReference>
<dbReference type="Gramene" id="OsMH63_11G026600_01">
    <property type="protein sequence ID" value="OsMH63_11G026600_01"/>
    <property type="gene ID" value="OsMH63_11G026600"/>
</dbReference>
<dbReference type="Gramene" id="OsPr106_11g0024930.01">
    <property type="protein sequence ID" value="OsPr106_11g0024930.01"/>
    <property type="gene ID" value="OsPr106_11g0024930"/>
</dbReference>
<dbReference type="Gramene" id="OsZS97_11G024810_01">
    <property type="protein sequence ID" value="OsZS97_11G024810_01"/>
    <property type="gene ID" value="OsZS97_11G024810"/>
</dbReference>
<dbReference type="HOGENOM" id="CLU_047036_5_3_1"/>
<dbReference type="OMA" id="IVHEFIY"/>
<dbReference type="OrthoDB" id="1658724at2759"/>
<dbReference type="Proteomes" id="UP000007015">
    <property type="component" value="Chromosome 11"/>
</dbReference>
<dbReference type="GO" id="GO:0005789">
    <property type="term" value="C:endoplasmic reticulum membrane"/>
    <property type="evidence" value="ECO:0007669"/>
    <property type="project" value="UniProtKB-SubCell"/>
</dbReference>
<dbReference type="GO" id="GO:0071771">
    <property type="term" value="F:aldehyde oxygenase (deformylating) activity"/>
    <property type="evidence" value="ECO:0007669"/>
    <property type="project" value="UniProtKB-EC"/>
</dbReference>
<dbReference type="GO" id="GO:0005506">
    <property type="term" value="F:iron ion binding"/>
    <property type="evidence" value="ECO:0007669"/>
    <property type="project" value="InterPro"/>
</dbReference>
<dbReference type="GO" id="GO:0016491">
    <property type="term" value="F:oxidoreductase activity"/>
    <property type="evidence" value="ECO:0007669"/>
    <property type="project" value="InterPro"/>
</dbReference>
<dbReference type="GO" id="GO:0008610">
    <property type="term" value="P:lipid biosynthetic process"/>
    <property type="evidence" value="ECO:0007669"/>
    <property type="project" value="InterPro"/>
</dbReference>
<dbReference type="InterPro" id="IPR006694">
    <property type="entry name" value="Fatty_acid_hydroxylase"/>
</dbReference>
<dbReference type="InterPro" id="IPR050307">
    <property type="entry name" value="Sterol_Desaturase_Related"/>
</dbReference>
<dbReference type="PANTHER" id="PTHR11863">
    <property type="entry name" value="STEROL DESATURASE"/>
    <property type="match status" value="1"/>
</dbReference>
<dbReference type="Pfam" id="PF04116">
    <property type="entry name" value="FA_hydroxylase"/>
    <property type="match status" value="1"/>
</dbReference>